<comment type="function">
    <text evidence="1">Specifically dimethylates two adjacent adenosines (A1518 and A1519) in the loop of a conserved hairpin near the 3'-end of 16S rRNA in the 30S particle. May play a critical role in biogenesis of 30S subunits.</text>
</comment>
<comment type="catalytic activity">
    <reaction evidence="1">
        <text>adenosine(1518)/adenosine(1519) in 16S rRNA + 4 S-adenosyl-L-methionine = N(6)-dimethyladenosine(1518)/N(6)-dimethyladenosine(1519) in 16S rRNA + 4 S-adenosyl-L-homocysteine + 4 H(+)</text>
        <dbReference type="Rhea" id="RHEA:19609"/>
        <dbReference type="Rhea" id="RHEA-COMP:10232"/>
        <dbReference type="Rhea" id="RHEA-COMP:10233"/>
        <dbReference type="ChEBI" id="CHEBI:15378"/>
        <dbReference type="ChEBI" id="CHEBI:57856"/>
        <dbReference type="ChEBI" id="CHEBI:59789"/>
        <dbReference type="ChEBI" id="CHEBI:74411"/>
        <dbReference type="ChEBI" id="CHEBI:74493"/>
        <dbReference type="EC" id="2.1.1.182"/>
    </reaction>
</comment>
<comment type="subcellular location">
    <subcellularLocation>
        <location evidence="1">Cytoplasm</location>
    </subcellularLocation>
</comment>
<comment type="similarity">
    <text evidence="1">Belongs to the class I-like SAM-binding methyltransferase superfamily. rRNA adenine N(6)-methyltransferase family. RsmA subfamily.</text>
</comment>
<feature type="chain" id="PRO_1000130234" description="Ribosomal RNA small subunit methyltransferase A">
    <location>
        <begin position="1"/>
        <end position="268"/>
    </location>
</feature>
<feature type="binding site" evidence="1">
    <location>
        <position position="17"/>
    </location>
    <ligand>
        <name>S-adenosyl-L-methionine</name>
        <dbReference type="ChEBI" id="CHEBI:59789"/>
    </ligand>
</feature>
<feature type="binding site" evidence="1">
    <location>
        <position position="19"/>
    </location>
    <ligand>
        <name>S-adenosyl-L-methionine</name>
        <dbReference type="ChEBI" id="CHEBI:59789"/>
    </ligand>
</feature>
<feature type="binding site" evidence="1">
    <location>
        <position position="44"/>
    </location>
    <ligand>
        <name>S-adenosyl-L-methionine</name>
        <dbReference type="ChEBI" id="CHEBI:59789"/>
    </ligand>
</feature>
<feature type="binding site" evidence="1">
    <location>
        <position position="65"/>
    </location>
    <ligand>
        <name>S-adenosyl-L-methionine</name>
        <dbReference type="ChEBI" id="CHEBI:59789"/>
    </ligand>
</feature>
<feature type="binding site" evidence="1">
    <location>
        <position position="89"/>
    </location>
    <ligand>
        <name>S-adenosyl-L-methionine</name>
        <dbReference type="ChEBI" id="CHEBI:59789"/>
    </ligand>
</feature>
<feature type="binding site" evidence="1">
    <location>
        <position position="110"/>
    </location>
    <ligand>
        <name>S-adenosyl-L-methionine</name>
        <dbReference type="ChEBI" id="CHEBI:59789"/>
    </ligand>
</feature>
<sequence>MMQEGGLPRAKKRFGQNFLVQPQIVERIVAAIRPASGDHLVEIGPGPGALTKSLLRLLPQFTVVELDRDMIAGLRALAPPEQLRVLQADALEVDFAALAGAGNALRIVGNLPYNVATPLIFHILEHAEQVRDMHFMLQKEVVDRVVAMPGSKAYGRLSVMIQAYCAVESLFTVAPGNFFPVPKVDSAFMRLIPHRPGLLPPHLQAPFARIVATSFAQRRKTLANNLRGILSADDLRGLQIDPGSRAETLDQAAFFRLAEATVEQGNRS</sequence>
<organism>
    <name type="scientific">Acidithiobacillus ferrooxidans (strain ATCC 53993 / BNL-5-31)</name>
    <name type="common">Leptospirillum ferrooxidans (ATCC 53993)</name>
    <dbReference type="NCBI Taxonomy" id="380394"/>
    <lineage>
        <taxon>Bacteria</taxon>
        <taxon>Pseudomonadati</taxon>
        <taxon>Pseudomonadota</taxon>
        <taxon>Acidithiobacillia</taxon>
        <taxon>Acidithiobacillales</taxon>
        <taxon>Acidithiobacillaceae</taxon>
        <taxon>Acidithiobacillus</taxon>
    </lineage>
</organism>
<reference key="1">
    <citation type="submission" date="2008-08" db="EMBL/GenBank/DDBJ databases">
        <title>Complete sequence of Acidithiobacillus ferrooxidans ATCC 53993.</title>
        <authorList>
            <person name="Lucas S."/>
            <person name="Copeland A."/>
            <person name="Lapidus A."/>
            <person name="Glavina del Rio T."/>
            <person name="Dalin E."/>
            <person name="Tice H."/>
            <person name="Bruce D."/>
            <person name="Goodwin L."/>
            <person name="Pitluck S."/>
            <person name="Sims D."/>
            <person name="Brettin T."/>
            <person name="Detter J.C."/>
            <person name="Han C."/>
            <person name="Kuske C.R."/>
            <person name="Larimer F."/>
            <person name="Land M."/>
            <person name="Hauser L."/>
            <person name="Kyrpides N."/>
            <person name="Lykidis A."/>
            <person name="Borole A.P."/>
        </authorList>
    </citation>
    <scope>NUCLEOTIDE SEQUENCE [LARGE SCALE GENOMIC DNA]</scope>
    <source>
        <strain>ATCC 53993 / BNL-5-31</strain>
    </source>
</reference>
<keyword id="KW-0963">Cytoplasm</keyword>
<keyword id="KW-0489">Methyltransferase</keyword>
<keyword id="KW-0694">RNA-binding</keyword>
<keyword id="KW-0698">rRNA processing</keyword>
<keyword id="KW-0949">S-adenosyl-L-methionine</keyword>
<keyword id="KW-0808">Transferase</keyword>
<protein>
    <recommendedName>
        <fullName evidence="1">Ribosomal RNA small subunit methyltransferase A</fullName>
        <ecNumber evidence="1">2.1.1.182</ecNumber>
    </recommendedName>
    <alternativeName>
        <fullName evidence="1">16S rRNA (adenine(1518)-N(6)/adenine(1519)-N(6))-dimethyltransferase</fullName>
    </alternativeName>
    <alternativeName>
        <fullName evidence="1">16S rRNA dimethyladenosine transferase</fullName>
    </alternativeName>
    <alternativeName>
        <fullName evidence="1">16S rRNA dimethylase</fullName>
    </alternativeName>
    <alternativeName>
        <fullName evidence="1">S-adenosylmethionine-6-N', N'-adenosyl(rRNA) dimethyltransferase</fullName>
    </alternativeName>
</protein>
<name>RSMA_ACIF5</name>
<accession>B5EL84</accession>
<proteinExistence type="inferred from homology"/>
<dbReference type="EC" id="2.1.1.182" evidence="1"/>
<dbReference type="EMBL" id="CP001132">
    <property type="protein sequence ID" value="ACH82600.1"/>
    <property type="molecule type" value="Genomic_DNA"/>
</dbReference>
<dbReference type="SMR" id="B5EL84"/>
<dbReference type="KEGG" id="afe:Lferr_0346"/>
<dbReference type="eggNOG" id="COG0030">
    <property type="taxonomic scope" value="Bacteria"/>
</dbReference>
<dbReference type="HOGENOM" id="CLU_041220_0_1_6"/>
<dbReference type="GO" id="GO:0005829">
    <property type="term" value="C:cytosol"/>
    <property type="evidence" value="ECO:0007669"/>
    <property type="project" value="TreeGrafter"/>
</dbReference>
<dbReference type="GO" id="GO:0052908">
    <property type="term" value="F:16S rRNA (adenine(1518)-N(6)/adenine(1519)-N(6))-dimethyltransferase activity"/>
    <property type="evidence" value="ECO:0007669"/>
    <property type="project" value="UniProtKB-EC"/>
</dbReference>
<dbReference type="GO" id="GO:0003723">
    <property type="term" value="F:RNA binding"/>
    <property type="evidence" value="ECO:0007669"/>
    <property type="project" value="UniProtKB-KW"/>
</dbReference>
<dbReference type="Gene3D" id="1.10.8.100">
    <property type="entry name" value="Ribosomal RNA adenine dimethylase-like, domain 2"/>
    <property type="match status" value="1"/>
</dbReference>
<dbReference type="Gene3D" id="3.40.50.150">
    <property type="entry name" value="Vaccinia Virus protein VP39"/>
    <property type="match status" value="1"/>
</dbReference>
<dbReference type="HAMAP" id="MF_00607">
    <property type="entry name" value="16SrRNA_methyltr_A"/>
    <property type="match status" value="1"/>
</dbReference>
<dbReference type="InterPro" id="IPR001737">
    <property type="entry name" value="KsgA/Erm"/>
</dbReference>
<dbReference type="InterPro" id="IPR023165">
    <property type="entry name" value="rRNA_Ade_diMease-like_C"/>
</dbReference>
<dbReference type="InterPro" id="IPR020596">
    <property type="entry name" value="rRNA_Ade_Mease_Trfase_CS"/>
</dbReference>
<dbReference type="InterPro" id="IPR020598">
    <property type="entry name" value="rRNA_Ade_methylase_Trfase_N"/>
</dbReference>
<dbReference type="InterPro" id="IPR011530">
    <property type="entry name" value="rRNA_adenine_dimethylase"/>
</dbReference>
<dbReference type="InterPro" id="IPR029063">
    <property type="entry name" value="SAM-dependent_MTases_sf"/>
</dbReference>
<dbReference type="NCBIfam" id="TIGR00755">
    <property type="entry name" value="ksgA"/>
    <property type="match status" value="1"/>
</dbReference>
<dbReference type="PANTHER" id="PTHR11727">
    <property type="entry name" value="DIMETHYLADENOSINE TRANSFERASE"/>
    <property type="match status" value="1"/>
</dbReference>
<dbReference type="PANTHER" id="PTHR11727:SF7">
    <property type="entry name" value="DIMETHYLADENOSINE TRANSFERASE-RELATED"/>
    <property type="match status" value="1"/>
</dbReference>
<dbReference type="Pfam" id="PF00398">
    <property type="entry name" value="RrnaAD"/>
    <property type="match status" value="1"/>
</dbReference>
<dbReference type="SMART" id="SM00650">
    <property type="entry name" value="rADc"/>
    <property type="match status" value="1"/>
</dbReference>
<dbReference type="SUPFAM" id="SSF53335">
    <property type="entry name" value="S-adenosyl-L-methionine-dependent methyltransferases"/>
    <property type="match status" value="1"/>
</dbReference>
<dbReference type="PROSITE" id="PS01131">
    <property type="entry name" value="RRNA_A_DIMETH"/>
    <property type="match status" value="1"/>
</dbReference>
<dbReference type="PROSITE" id="PS51689">
    <property type="entry name" value="SAM_RNA_A_N6_MT"/>
    <property type="match status" value="1"/>
</dbReference>
<evidence type="ECO:0000255" key="1">
    <source>
        <dbReference type="HAMAP-Rule" id="MF_00607"/>
    </source>
</evidence>
<gene>
    <name evidence="1" type="primary">rsmA</name>
    <name evidence="1" type="synonym">ksgA</name>
    <name type="ordered locus">Lferr_0346</name>
</gene>